<feature type="chain" id="PRO_0000414329" description="Acireductone dioxygenase">
    <location>
        <begin position="1"/>
        <end position="179"/>
    </location>
</feature>
<feature type="region of interest" description="Disordered" evidence="2">
    <location>
        <begin position="1"/>
        <end position="21"/>
    </location>
</feature>
<feature type="compositionally biased region" description="Acidic residues" evidence="2">
    <location>
        <begin position="1"/>
        <end position="12"/>
    </location>
</feature>
<feature type="binding site" evidence="1">
    <location>
        <position position="88"/>
    </location>
    <ligand>
        <name>Fe(2+)</name>
        <dbReference type="ChEBI" id="CHEBI:29033"/>
        <note>for iron-dependent acireductone dioxygenase activity</note>
    </ligand>
</feature>
<feature type="binding site" evidence="1">
    <location>
        <position position="88"/>
    </location>
    <ligand>
        <name>Ni(2+)</name>
        <dbReference type="ChEBI" id="CHEBI:49786"/>
        <note>for nickel-dependent acireductone dioxygenase activity</note>
    </ligand>
</feature>
<feature type="binding site" evidence="1">
    <location>
        <position position="90"/>
    </location>
    <ligand>
        <name>Fe(2+)</name>
        <dbReference type="ChEBI" id="CHEBI:29033"/>
        <note>for iron-dependent acireductone dioxygenase activity</note>
    </ligand>
</feature>
<feature type="binding site" evidence="1">
    <location>
        <position position="90"/>
    </location>
    <ligand>
        <name>Ni(2+)</name>
        <dbReference type="ChEBI" id="CHEBI:49786"/>
        <note>for nickel-dependent acireductone dioxygenase activity</note>
    </ligand>
</feature>
<feature type="binding site" evidence="1">
    <location>
        <position position="94"/>
    </location>
    <ligand>
        <name>Fe(2+)</name>
        <dbReference type="ChEBI" id="CHEBI:29033"/>
        <note>for iron-dependent acireductone dioxygenase activity</note>
    </ligand>
</feature>
<feature type="binding site" evidence="1">
    <location>
        <position position="94"/>
    </location>
    <ligand>
        <name>Ni(2+)</name>
        <dbReference type="ChEBI" id="CHEBI:49786"/>
        <note>for nickel-dependent acireductone dioxygenase activity</note>
    </ligand>
</feature>
<feature type="binding site" evidence="1">
    <location>
        <position position="133"/>
    </location>
    <ligand>
        <name>Fe(2+)</name>
        <dbReference type="ChEBI" id="CHEBI:29033"/>
        <note>for iron-dependent acireductone dioxygenase activity</note>
    </ligand>
</feature>
<feature type="binding site" evidence="1">
    <location>
        <position position="133"/>
    </location>
    <ligand>
        <name>Ni(2+)</name>
        <dbReference type="ChEBI" id="CHEBI:49786"/>
        <note>for nickel-dependent acireductone dioxygenase activity</note>
    </ligand>
</feature>
<proteinExistence type="inferred from homology"/>
<reference key="1">
    <citation type="journal article" date="2007" name="Nature">
        <title>Genome of the marsupial Monodelphis domestica reveals innovation in non-coding sequences.</title>
        <authorList>
            <person name="Mikkelsen T.S."/>
            <person name="Wakefield M.J."/>
            <person name="Aken B."/>
            <person name="Amemiya C.T."/>
            <person name="Chang J.L."/>
            <person name="Duke S."/>
            <person name="Garber M."/>
            <person name="Gentles A.J."/>
            <person name="Goodstadt L."/>
            <person name="Heger A."/>
            <person name="Jurka J."/>
            <person name="Kamal M."/>
            <person name="Mauceli E."/>
            <person name="Searle S.M."/>
            <person name="Sharpe T."/>
            <person name="Baker M.L."/>
            <person name="Batzer M.A."/>
            <person name="Benos P.V."/>
            <person name="Belov K."/>
            <person name="Clamp M."/>
            <person name="Cook A."/>
            <person name="Cuff J."/>
            <person name="Das R."/>
            <person name="Davidow L."/>
            <person name="Deakin J.E."/>
            <person name="Fazzari M.J."/>
            <person name="Glass J.L."/>
            <person name="Grabherr M."/>
            <person name="Greally J.M."/>
            <person name="Gu W."/>
            <person name="Hore T.A."/>
            <person name="Huttley G.A."/>
            <person name="Kleber M."/>
            <person name="Jirtle R.L."/>
            <person name="Koina E."/>
            <person name="Lee J.T."/>
            <person name="Mahony S."/>
            <person name="Marra M.A."/>
            <person name="Miller R.D."/>
            <person name="Nicholls R.D."/>
            <person name="Oda M."/>
            <person name="Papenfuss A.T."/>
            <person name="Parra Z.E."/>
            <person name="Pollock D.D."/>
            <person name="Ray D.A."/>
            <person name="Schein J.E."/>
            <person name="Speed T.P."/>
            <person name="Thompson K."/>
            <person name="VandeBerg J.L."/>
            <person name="Wade C.M."/>
            <person name="Walker J.A."/>
            <person name="Waters P.D."/>
            <person name="Webber C."/>
            <person name="Weidman J.R."/>
            <person name="Xie X."/>
            <person name="Zody M.C."/>
            <person name="Baldwin J."/>
            <person name="Abdouelleil A."/>
            <person name="Abdulkadir J."/>
            <person name="Abebe A."/>
            <person name="Abera B."/>
            <person name="Abreu J."/>
            <person name="Acer S.C."/>
            <person name="Aftuck L."/>
            <person name="Alexander A."/>
            <person name="An P."/>
            <person name="Anderson E."/>
            <person name="Anderson S."/>
            <person name="Arachi H."/>
            <person name="Azer M."/>
            <person name="Bachantsang P."/>
            <person name="Barry A."/>
            <person name="Bayul T."/>
            <person name="Berlin A."/>
            <person name="Bessette D."/>
            <person name="Bloom T."/>
            <person name="Bloom T."/>
            <person name="Boguslavskiy L."/>
            <person name="Bonnet C."/>
            <person name="Boukhgalter B."/>
            <person name="Bourzgui I."/>
            <person name="Brown A."/>
            <person name="Cahill P."/>
            <person name="Channer S."/>
            <person name="Cheshatsang Y."/>
            <person name="Chuda L."/>
            <person name="Citroen M."/>
            <person name="Collymore A."/>
            <person name="Cooke P."/>
            <person name="Costello M."/>
            <person name="D'Aco K."/>
            <person name="Daza R."/>
            <person name="De Haan G."/>
            <person name="DeGray S."/>
            <person name="DeMaso C."/>
            <person name="Dhargay N."/>
            <person name="Dooley K."/>
            <person name="Dooley E."/>
            <person name="Doricent M."/>
            <person name="Dorje P."/>
            <person name="Dorjee K."/>
            <person name="Dupes A."/>
            <person name="Elong R."/>
            <person name="Falk J."/>
            <person name="Farina A."/>
            <person name="Faro S."/>
            <person name="Ferguson D."/>
            <person name="Fisher S."/>
            <person name="Foley C.D."/>
            <person name="Franke A."/>
            <person name="Friedrich D."/>
            <person name="Gadbois L."/>
            <person name="Gearin G."/>
            <person name="Gearin C.R."/>
            <person name="Giannoukos G."/>
            <person name="Goode T."/>
            <person name="Graham J."/>
            <person name="Grandbois E."/>
            <person name="Grewal S."/>
            <person name="Gyaltsen K."/>
            <person name="Hafez N."/>
            <person name="Hagos B."/>
            <person name="Hall J."/>
            <person name="Henson C."/>
            <person name="Hollinger A."/>
            <person name="Honan T."/>
            <person name="Huard M.D."/>
            <person name="Hughes L."/>
            <person name="Hurhula B."/>
            <person name="Husby M.E."/>
            <person name="Kamat A."/>
            <person name="Kanga B."/>
            <person name="Kashin S."/>
            <person name="Khazanovich D."/>
            <person name="Kisner P."/>
            <person name="Lance K."/>
            <person name="Lara M."/>
            <person name="Lee W."/>
            <person name="Lennon N."/>
            <person name="Letendre F."/>
            <person name="LeVine R."/>
            <person name="Lipovsky A."/>
            <person name="Liu X."/>
            <person name="Liu J."/>
            <person name="Liu S."/>
            <person name="Lokyitsang T."/>
            <person name="Lokyitsang Y."/>
            <person name="Lubonja R."/>
            <person name="Lui A."/>
            <person name="MacDonald P."/>
            <person name="Magnisalis V."/>
            <person name="Maru K."/>
            <person name="Matthews C."/>
            <person name="McCusker W."/>
            <person name="McDonough S."/>
            <person name="Mehta T."/>
            <person name="Meldrim J."/>
            <person name="Meneus L."/>
            <person name="Mihai O."/>
            <person name="Mihalev A."/>
            <person name="Mihova T."/>
            <person name="Mittelman R."/>
            <person name="Mlenga V."/>
            <person name="Montmayeur A."/>
            <person name="Mulrain L."/>
            <person name="Navidi A."/>
            <person name="Naylor J."/>
            <person name="Negash T."/>
            <person name="Nguyen T."/>
            <person name="Nguyen N."/>
            <person name="Nicol R."/>
            <person name="Norbu C."/>
            <person name="Norbu N."/>
            <person name="Novod N."/>
            <person name="O'Neill B."/>
            <person name="Osman S."/>
            <person name="Markiewicz E."/>
            <person name="Oyono O.L."/>
            <person name="Patti C."/>
            <person name="Phunkhang P."/>
            <person name="Pierre F."/>
            <person name="Priest M."/>
            <person name="Raghuraman S."/>
            <person name="Rege F."/>
            <person name="Reyes R."/>
            <person name="Rise C."/>
            <person name="Rogov P."/>
            <person name="Ross K."/>
            <person name="Ryan E."/>
            <person name="Settipalli S."/>
            <person name="Shea T."/>
            <person name="Sherpa N."/>
            <person name="Shi L."/>
            <person name="Shih D."/>
            <person name="Sparrow T."/>
            <person name="Spaulding J."/>
            <person name="Stalker J."/>
            <person name="Stange-Thomann N."/>
            <person name="Stavropoulos S."/>
            <person name="Stone C."/>
            <person name="Strader C."/>
            <person name="Tesfaye S."/>
            <person name="Thomson T."/>
            <person name="Thoulutsang Y."/>
            <person name="Thoulutsang D."/>
            <person name="Topham K."/>
            <person name="Topping I."/>
            <person name="Tsamla T."/>
            <person name="Vassiliev H."/>
            <person name="Vo A."/>
            <person name="Wangchuk T."/>
            <person name="Wangdi T."/>
            <person name="Weiand M."/>
            <person name="Wilkinson J."/>
            <person name="Wilson A."/>
            <person name="Yadav S."/>
            <person name="Young G."/>
            <person name="Yu Q."/>
            <person name="Zembek L."/>
            <person name="Zhong D."/>
            <person name="Zimmer A."/>
            <person name="Zwirko Z."/>
            <person name="Jaffe D.B."/>
            <person name="Alvarez P."/>
            <person name="Brockman W."/>
            <person name="Butler J."/>
            <person name="Chin C."/>
            <person name="Gnerre S."/>
            <person name="MacCallum I."/>
            <person name="Graves J.A."/>
            <person name="Ponting C.P."/>
            <person name="Breen M."/>
            <person name="Samollow P.B."/>
            <person name="Lander E.S."/>
            <person name="Lindblad-Toh K."/>
        </authorList>
    </citation>
    <scope>NUCLEOTIDE SEQUENCE [LARGE SCALE GENOMIC DNA]</scope>
</reference>
<dbReference type="EC" id="1.13.11.54" evidence="1"/>
<dbReference type="EC" id="1.13.11.53" evidence="1"/>
<dbReference type="RefSeq" id="XP_001381344.1">
    <property type="nucleotide sequence ID" value="XM_001381307.5"/>
</dbReference>
<dbReference type="SMR" id="F7FKV1"/>
<dbReference type="FunCoup" id="F7FKV1">
    <property type="interactions" value="1277"/>
</dbReference>
<dbReference type="STRING" id="13616.ENSMODP00000018102"/>
<dbReference type="GeneID" id="100032300"/>
<dbReference type="KEGG" id="mdo:100032300"/>
<dbReference type="KEGG" id="mdo:103096762"/>
<dbReference type="CTD" id="55256"/>
<dbReference type="eggNOG" id="KOG2107">
    <property type="taxonomic scope" value="Eukaryota"/>
</dbReference>
<dbReference type="HOGENOM" id="CLU_090154_0_0_1"/>
<dbReference type="InParanoid" id="F7FKV1"/>
<dbReference type="OrthoDB" id="1867259at2759"/>
<dbReference type="TreeFam" id="TF300231"/>
<dbReference type="UniPathway" id="UPA00904">
    <property type="reaction ID" value="UER00878"/>
</dbReference>
<dbReference type="Proteomes" id="UP000002280">
    <property type="component" value="Unplaced"/>
</dbReference>
<dbReference type="GO" id="GO:0005737">
    <property type="term" value="C:cytoplasm"/>
    <property type="evidence" value="ECO:0007669"/>
    <property type="project" value="UniProtKB-SubCell"/>
</dbReference>
<dbReference type="GO" id="GO:0005634">
    <property type="term" value="C:nucleus"/>
    <property type="evidence" value="ECO:0007669"/>
    <property type="project" value="UniProtKB-SubCell"/>
</dbReference>
<dbReference type="GO" id="GO:0005886">
    <property type="term" value="C:plasma membrane"/>
    <property type="evidence" value="ECO:0007669"/>
    <property type="project" value="UniProtKB-SubCell"/>
</dbReference>
<dbReference type="GO" id="GO:0010308">
    <property type="term" value="F:acireductone dioxygenase (Ni2+-requiring) activity"/>
    <property type="evidence" value="ECO:0007669"/>
    <property type="project" value="UniProtKB-UniRule"/>
</dbReference>
<dbReference type="GO" id="GO:0010309">
    <property type="term" value="F:acireductone dioxygenase [iron(II)-requiring] activity"/>
    <property type="evidence" value="ECO:0000318"/>
    <property type="project" value="GO_Central"/>
</dbReference>
<dbReference type="GO" id="GO:0005506">
    <property type="term" value="F:iron ion binding"/>
    <property type="evidence" value="ECO:0007669"/>
    <property type="project" value="UniProtKB-UniRule"/>
</dbReference>
<dbReference type="GO" id="GO:0016151">
    <property type="term" value="F:nickel cation binding"/>
    <property type="evidence" value="ECO:0007669"/>
    <property type="project" value="UniProtKB-UniRule"/>
</dbReference>
<dbReference type="GO" id="GO:0019509">
    <property type="term" value="P:L-methionine salvage from methylthioadenosine"/>
    <property type="evidence" value="ECO:0007669"/>
    <property type="project" value="UniProtKB-UniRule"/>
</dbReference>
<dbReference type="GO" id="GO:0006555">
    <property type="term" value="P:methionine metabolic process"/>
    <property type="evidence" value="ECO:0000318"/>
    <property type="project" value="GO_Central"/>
</dbReference>
<dbReference type="CDD" id="cd02232">
    <property type="entry name" value="cupin_ARD"/>
    <property type="match status" value="1"/>
</dbReference>
<dbReference type="FunFam" id="2.60.120.10:FF:000031">
    <property type="entry name" value="1,2-dihydroxy-3-keto-5-methylthiopentene dioxygenase"/>
    <property type="match status" value="1"/>
</dbReference>
<dbReference type="Gene3D" id="2.60.120.10">
    <property type="entry name" value="Jelly Rolls"/>
    <property type="match status" value="1"/>
</dbReference>
<dbReference type="HAMAP" id="MF_03154">
    <property type="entry name" value="Salvage_MtnD_euk"/>
    <property type="match status" value="1"/>
</dbReference>
<dbReference type="InterPro" id="IPR004313">
    <property type="entry name" value="ARD"/>
</dbReference>
<dbReference type="InterPro" id="IPR027496">
    <property type="entry name" value="ARD_euk"/>
</dbReference>
<dbReference type="InterPro" id="IPR014710">
    <property type="entry name" value="RmlC-like_jellyroll"/>
</dbReference>
<dbReference type="InterPro" id="IPR011051">
    <property type="entry name" value="RmlC_Cupin_sf"/>
</dbReference>
<dbReference type="PANTHER" id="PTHR23418">
    <property type="entry name" value="ACIREDUCTONE DIOXYGENASE"/>
    <property type="match status" value="1"/>
</dbReference>
<dbReference type="PANTHER" id="PTHR23418:SF0">
    <property type="entry name" value="ACIREDUCTONE DIOXYGENASE"/>
    <property type="match status" value="1"/>
</dbReference>
<dbReference type="Pfam" id="PF03079">
    <property type="entry name" value="ARD"/>
    <property type="match status" value="1"/>
</dbReference>
<dbReference type="SUPFAM" id="SSF51182">
    <property type="entry name" value="RmlC-like cupins"/>
    <property type="match status" value="1"/>
</dbReference>
<organism>
    <name type="scientific">Monodelphis domestica</name>
    <name type="common">Gray short-tailed opossum</name>
    <dbReference type="NCBI Taxonomy" id="13616"/>
    <lineage>
        <taxon>Eukaryota</taxon>
        <taxon>Metazoa</taxon>
        <taxon>Chordata</taxon>
        <taxon>Craniata</taxon>
        <taxon>Vertebrata</taxon>
        <taxon>Euteleostomi</taxon>
        <taxon>Mammalia</taxon>
        <taxon>Metatheria</taxon>
        <taxon>Didelphimorphia</taxon>
        <taxon>Didelphidae</taxon>
        <taxon>Monodelphis</taxon>
    </lineage>
</organism>
<comment type="function">
    <text evidence="1">Catalyzes 2 different reactions between oxygen and the acireductone 1,2-dihydroxy-3-keto-5-methylthiopentene (DHK-MTPene) depending upon the metal bound in the active site. Fe-containing acireductone dioxygenase (Fe-ARD) produces formate and 2-keto-4-methylthiobutyrate (KMTB), the alpha-ketoacid precursor of methionine in the methionine recycle pathway. Ni-containing acireductone dioxygenase (Ni-ARD) produces methylthiopropionate, carbon monoxide and formate, and does not lie on the methionine recycle pathway. Also down-regulates cell migration mediated by MMP14.</text>
</comment>
<comment type="catalytic activity">
    <reaction evidence="1">
        <text>1,2-dihydroxy-5-(methylsulfanyl)pent-1-en-3-one + O2 = 4-methylsulfanyl-2-oxobutanoate + formate + 2 H(+)</text>
        <dbReference type="Rhea" id="RHEA:24504"/>
        <dbReference type="ChEBI" id="CHEBI:15378"/>
        <dbReference type="ChEBI" id="CHEBI:15379"/>
        <dbReference type="ChEBI" id="CHEBI:15740"/>
        <dbReference type="ChEBI" id="CHEBI:16723"/>
        <dbReference type="ChEBI" id="CHEBI:49252"/>
        <dbReference type="EC" id="1.13.11.54"/>
    </reaction>
</comment>
<comment type="catalytic activity">
    <reaction evidence="1">
        <text>1,2-dihydroxy-5-(methylsulfanyl)pent-1-en-3-one + O2 = 3-(methylsulfanyl)propanoate + CO + formate + 2 H(+)</text>
        <dbReference type="Rhea" id="RHEA:14161"/>
        <dbReference type="ChEBI" id="CHEBI:15378"/>
        <dbReference type="ChEBI" id="CHEBI:15379"/>
        <dbReference type="ChEBI" id="CHEBI:15740"/>
        <dbReference type="ChEBI" id="CHEBI:17245"/>
        <dbReference type="ChEBI" id="CHEBI:49016"/>
        <dbReference type="ChEBI" id="CHEBI:49252"/>
        <dbReference type="EC" id="1.13.11.53"/>
    </reaction>
</comment>
<comment type="cofactor">
    <cofactor evidence="1">
        <name>Fe(2+)</name>
        <dbReference type="ChEBI" id="CHEBI:29033"/>
    </cofactor>
    <cofactor evidence="1">
        <name>Ni(2+)</name>
        <dbReference type="ChEBI" id="CHEBI:49786"/>
    </cofactor>
    <text evidence="1">Binds either 1 Fe or Ni cation per monomer. Iron-binding promotes an acireductone dioxygenase reaction producing 2-keto-4-methylthiobutyrate, while nickel-binding promotes an acireductone dioxygenase reaction producing 3-(methylsulfanyl)propanoate.</text>
</comment>
<comment type="pathway">
    <text evidence="1">Amino-acid biosynthesis; L-methionine biosynthesis via salvage pathway; L-methionine from S-methyl-5-thio-alpha-D-ribose 1-phosphate: step 5/6.</text>
</comment>
<comment type="subunit">
    <text evidence="1">Monomer. Interacts with MMP14.</text>
</comment>
<comment type="subcellular location">
    <subcellularLocation>
        <location evidence="1">Cytoplasm</location>
    </subcellularLocation>
    <subcellularLocation>
        <location evidence="1">Nucleus</location>
    </subcellularLocation>
    <subcellularLocation>
        <location evidence="1">Cell membrane</location>
        <topology evidence="1">Peripheral membrane protein</topology>
        <orientation evidence="1">Cytoplasmic side</orientation>
    </subcellularLocation>
    <text evidence="1">Localizes to the plasma membrane when complexed to MMP14.</text>
</comment>
<comment type="similarity">
    <text evidence="1">Belongs to the acireductone dioxygenase (ARD) family.</text>
</comment>
<gene>
    <name evidence="1" type="primary">ADI1</name>
    <name evidence="1" type="synonym">MTCBP1</name>
</gene>
<keyword id="KW-0028">Amino-acid biosynthesis</keyword>
<keyword id="KW-1003">Cell membrane</keyword>
<keyword id="KW-0963">Cytoplasm</keyword>
<keyword id="KW-0223">Dioxygenase</keyword>
<keyword id="KW-0408">Iron</keyword>
<keyword id="KW-0472">Membrane</keyword>
<keyword id="KW-0479">Metal-binding</keyword>
<keyword id="KW-0486">Methionine biosynthesis</keyword>
<keyword id="KW-0533">Nickel</keyword>
<keyword id="KW-0539">Nucleus</keyword>
<keyword id="KW-0560">Oxidoreductase</keyword>
<keyword id="KW-1185">Reference proteome</keyword>
<protein>
    <recommendedName>
        <fullName evidence="1">Acireductone dioxygenase</fullName>
    </recommendedName>
    <alternativeName>
        <fullName evidence="1">Acireductone dioxygenase (Fe(2+)-requiring)</fullName>
        <shortName evidence="1">ARD'</shortName>
        <shortName evidence="1">Fe-ARD</shortName>
        <ecNumber evidence="1">1.13.11.54</ecNumber>
    </alternativeName>
    <alternativeName>
        <fullName evidence="1">Acireductone dioxygenase (Ni(2+)-requiring)</fullName>
        <shortName evidence="1">ARD</shortName>
        <shortName evidence="1">Ni-ARD</shortName>
        <ecNumber evidence="1">1.13.11.53</ecNumber>
    </alternativeName>
    <alternativeName>
        <fullName evidence="1">Membrane-type 1 matrix metalloproteinase cytoplasmic tail-binding protein 1</fullName>
        <shortName evidence="1">MTCBP-1</shortName>
    </alternativeName>
</protein>
<evidence type="ECO:0000255" key="1">
    <source>
        <dbReference type="HAMAP-Rule" id="MF_03154"/>
    </source>
</evidence>
<evidence type="ECO:0000256" key="2">
    <source>
        <dbReference type="SAM" id="MobiDB-lite"/>
    </source>
</evidence>
<accession>F7FKV1</accession>
<sequence length="179" mass="21811">MVEAWYMDDSEEDQRRPHRLEPERPVSLAHLQQLGVFYWKLDADKYEDDPELEKIRKERKYCWMDIITICKDKLPNYEEKIKMFYEEHLHLDDEIRYILDGSGYFDVRDKEDKWIRIFMEKGDMITLPAGIYHRFTLDETNYVKAMRLFVGEPVWTAYNRPADHFEIRGQYLQFLAQKG</sequence>
<name>MTND_MONDO</name>